<organism>
    <name type="scientific">Dehalococcoides mccartyi (strain ATCC BAA-2266 / KCTC 15142 / 195)</name>
    <name type="common">Dehalococcoides ethenogenes (strain 195)</name>
    <dbReference type="NCBI Taxonomy" id="243164"/>
    <lineage>
        <taxon>Bacteria</taxon>
        <taxon>Bacillati</taxon>
        <taxon>Chloroflexota</taxon>
        <taxon>Dehalococcoidia</taxon>
        <taxon>Dehalococcoidales</taxon>
        <taxon>Dehalococcoidaceae</taxon>
        <taxon>Dehalococcoides</taxon>
    </lineage>
</organism>
<comment type="similarity">
    <text evidence="1">Belongs to the UPF0145 family.</text>
</comment>
<dbReference type="EMBL" id="CP000027">
    <property type="protein sequence ID" value="AAW39095.1"/>
    <property type="molecule type" value="Genomic_DNA"/>
</dbReference>
<dbReference type="RefSeq" id="WP_010937288.1">
    <property type="nucleotide sequence ID" value="NC_002936.3"/>
</dbReference>
<dbReference type="SMR" id="Q3Z637"/>
<dbReference type="STRING" id="243164.DET1617"/>
<dbReference type="GeneID" id="3229052"/>
<dbReference type="KEGG" id="det:DET1617"/>
<dbReference type="PATRIC" id="fig|243164.10.peg.1528"/>
<dbReference type="eggNOG" id="COG0393">
    <property type="taxonomic scope" value="Bacteria"/>
</dbReference>
<dbReference type="HOGENOM" id="CLU_117144_1_2_0"/>
<dbReference type="InParanoid" id="Q3Z637"/>
<dbReference type="Proteomes" id="UP000008289">
    <property type="component" value="Chromosome"/>
</dbReference>
<dbReference type="Gene3D" id="3.30.110.70">
    <property type="entry name" value="Hypothetical protein apc22750. Chain B"/>
    <property type="match status" value="1"/>
</dbReference>
<dbReference type="HAMAP" id="MF_00338">
    <property type="entry name" value="UPF0145"/>
    <property type="match status" value="1"/>
</dbReference>
<dbReference type="InterPro" id="IPR035439">
    <property type="entry name" value="UPF0145_dom_sf"/>
</dbReference>
<dbReference type="InterPro" id="IPR002765">
    <property type="entry name" value="UPF0145_YbjQ-like"/>
</dbReference>
<dbReference type="PANTHER" id="PTHR34068:SF2">
    <property type="entry name" value="UPF0145 PROTEIN SCO3412"/>
    <property type="match status" value="1"/>
</dbReference>
<dbReference type="PANTHER" id="PTHR34068">
    <property type="entry name" value="UPF0145 PROTEIN YBJQ"/>
    <property type="match status" value="1"/>
</dbReference>
<dbReference type="Pfam" id="PF01906">
    <property type="entry name" value="YbjQ_1"/>
    <property type="match status" value="1"/>
</dbReference>
<dbReference type="SUPFAM" id="SSF117782">
    <property type="entry name" value="YbjQ-like"/>
    <property type="match status" value="1"/>
</dbReference>
<accession>Q3Z637</accession>
<protein>
    <recommendedName>
        <fullName evidence="1">UPF0145 protein DET1617</fullName>
    </recommendedName>
</protein>
<sequence>MILTNTEDVAGHKIIKNLGLVKGNTIRAKHIGKDILAGLRSIVGGEIEEYTQMLDEARNEAIRRMEAEAKEKGANAIICVRFSTSAVMQNASEVMAYGTAVIVE</sequence>
<evidence type="ECO:0000255" key="1">
    <source>
        <dbReference type="HAMAP-Rule" id="MF_00338"/>
    </source>
</evidence>
<name>Y1617_DEHM1</name>
<feature type="chain" id="PRO_0000225823" description="UPF0145 protein DET1617">
    <location>
        <begin position="1"/>
        <end position="104"/>
    </location>
</feature>
<proteinExistence type="inferred from homology"/>
<reference key="1">
    <citation type="journal article" date="2005" name="Science">
        <title>Genome sequence of the PCE-dechlorinating bacterium Dehalococcoides ethenogenes.</title>
        <authorList>
            <person name="Seshadri R."/>
            <person name="Adrian L."/>
            <person name="Fouts D.E."/>
            <person name="Eisen J.A."/>
            <person name="Phillippy A.M."/>
            <person name="Methe B.A."/>
            <person name="Ward N.L."/>
            <person name="Nelson W.C."/>
            <person name="DeBoy R.T."/>
            <person name="Khouri H.M."/>
            <person name="Kolonay J.F."/>
            <person name="Dodson R.J."/>
            <person name="Daugherty S.C."/>
            <person name="Brinkac L.M."/>
            <person name="Sullivan S.A."/>
            <person name="Madupu R."/>
            <person name="Nelson K.E."/>
            <person name="Kang K.H."/>
            <person name="Impraim M."/>
            <person name="Tran K."/>
            <person name="Robinson J.M."/>
            <person name="Forberger H.A."/>
            <person name="Fraser C.M."/>
            <person name="Zinder S.H."/>
            <person name="Heidelberg J.F."/>
        </authorList>
    </citation>
    <scope>NUCLEOTIDE SEQUENCE [LARGE SCALE GENOMIC DNA]</scope>
    <source>
        <strain>ATCC BAA-2266 / KCTC 15142 / 195</strain>
    </source>
</reference>
<gene>
    <name type="ordered locus">DET1617</name>
</gene>